<keyword id="KW-1064">Adaptive immunity</keyword>
<keyword id="KW-1003">Cell membrane</keyword>
<keyword id="KW-1015">Disulfide bond</keyword>
<keyword id="KW-0391">Immunity</keyword>
<keyword id="KW-1280">Immunoglobulin</keyword>
<keyword id="KW-0393">Immunoglobulin domain</keyword>
<keyword id="KW-0472">Membrane</keyword>
<keyword id="KW-1267">Proteomics identification</keyword>
<keyword id="KW-1185">Reference proteome</keyword>
<keyword id="KW-0964">Secreted</keyword>
<keyword id="KW-0732">Signal</keyword>
<name>HV349_HUMAN</name>
<feature type="signal peptide" evidence="2">
    <location>
        <begin position="1"/>
        <end position="19"/>
    </location>
</feature>
<feature type="chain" id="PRO_5007385652" description="Immunoglobulin heavy variable 3-49" evidence="2">
    <location>
        <begin position="20"/>
        <end position="119"/>
    </location>
</feature>
<feature type="domain" description="Ig-like" evidence="3">
    <location>
        <begin position="20"/>
        <end position="119" status="greater than"/>
    </location>
</feature>
<feature type="region of interest" description="Framework-1" evidence="1">
    <location>
        <begin position="20"/>
        <end position="44"/>
    </location>
</feature>
<feature type="region of interest" description="Complementarity-determining-1" evidence="1">
    <location>
        <begin position="45"/>
        <end position="52"/>
    </location>
</feature>
<feature type="region of interest" description="Framework-2" evidence="1">
    <location>
        <begin position="53"/>
        <end position="69"/>
    </location>
</feature>
<feature type="region of interest" description="Complementarity-determining-2" evidence="1">
    <location>
        <begin position="70"/>
        <end position="79"/>
    </location>
</feature>
<feature type="region of interest" description="Framework-3" evidence="1">
    <location>
        <begin position="80"/>
        <end position="117"/>
    </location>
</feature>
<feature type="region of interest" description="Complementarity-determining-3" evidence="1">
    <location>
        <begin position="118"/>
        <end position="119" status="greater than"/>
    </location>
</feature>
<feature type="disulfide bond" evidence="3">
    <location>
        <begin position="41"/>
        <end position="117"/>
    </location>
</feature>
<feature type="non-terminal residue">
    <location>
        <position position="119"/>
    </location>
</feature>
<gene>
    <name evidence="4 9" type="primary">IGHV3-49</name>
</gene>
<evidence type="ECO:0000250" key="1">
    <source>
        <dbReference type="UniProtKB" id="P23083"/>
    </source>
</evidence>
<evidence type="ECO:0000255" key="2"/>
<evidence type="ECO:0000255" key="3">
    <source>
        <dbReference type="PROSITE-ProRule" id="PRU00114"/>
    </source>
</evidence>
<evidence type="ECO:0000303" key="4">
    <source>
    </source>
</evidence>
<evidence type="ECO:0000303" key="5">
    <source>
    </source>
</evidence>
<evidence type="ECO:0000303" key="6">
    <source>
    </source>
</evidence>
<evidence type="ECO:0000303" key="7">
    <source>
    </source>
</evidence>
<evidence type="ECO:0000303" key="8">
    <source>
    </source>
</evidence>
<evidence type="ECO:0000303" key="9">
    <source ref="3"/>
</evidence>
<evidence type="ECO:0000305" key="10"/>
<dbReference type="EMBL" id="AC244452">
    <property type="status" value="NOT_ANNOTATED_CDS"/>
    <property type="molecule type" value="Genomic_DNA"/>
</dbReference>
<dbReference type="EMBL" id="AC245369">
    <property type="status" value="NOT_ANNOTATED_CDS"/>
    <property type="molecule type" value="Genomic_DNA"/>
</dbReference>
<dbReference type="EMDB" id="EMD-27519"/>
<dbReference type="EMDB" id="EMD-27520"/>
<dbReference type="EMDB" id="EMD-27521"/>
<dbReference type="EMDB" id="EMD-27522"/>
<dbReference type="SMR" id="A0A0A0MS15"/>
<dbReference type="FunCoup" id="A0A0A0MS15">
    <property type="interactions" value="253"/>
</dbReference>
<dbReference type="IMGT_GENE-DB" id="IGHV3-49"/>
<dbReference type="BioMuta" id="IGHV3-49"/>
<dbReference type="MassIVE" id="A0A0A0MS15"/>
<dbReference type="Ensembl" id="ENST00000390625.3">
    <property type="protein sequence ID" value="ENSP00000375034.2"/>
    <property type="gene ID" value="ENSG00000211965.4"/>
</dbReference>
<dbReference type="Ensembl" id="ENST00000632211.1">
    <property type="protein sequence ID" value="ENSP00000488069.1"/>
    <property type="gene ID" value="ENSG00000275316.3"/>
</dbReference>
<dbReference type="UCSC" id="uc059ggt.1">
    <property type="organism name" value="human"/>
</dbReference>
<dbReference type="AGR" id="HGNC:5607"/>
<dbReference type="GeneCards" id="IGHV3-49"/>
<dbReference type="HGNC" id="HGNC:5607">
    <property type="gene designation" value="IGHV3-49"/>
</dbReference>
<dbReference type="HPA" id="ENSG00000211965">
    <property type="expression patterns" value="Group enriched (intestine, lymphoid tissue, stomach, urinary bladder)"/>
</dbReference>
<dbReference type="neXtProt" id="NX_A0A0A0MS15"/>
<dbReference type="OpenTargets" id="ENSG00000211965"/>
<dbReference type="VEuPathDB" id="HostDB:ENSG00000211965"/>
<dbReference type="GeneTree" id="ENSGT01050000244871"/>
<dbReference type="InParanoid" id="A0A0A0MS15"/>
<dbReference type="OMA" id="GAQSHQG"/>
<dbReference type="OrthoDB" id="9945861at2759"/>
<dbReference type="PAN-GO" id="A0A0A0MS15">
    <property type="GO annotations" value="11 GO annotations based on evolutionary models"/>
</dbReference>
<dbReference type="PhylomeDB" id="A0A0A0MS15"/>
<dbReference type="SignaLink" id="A0A0A0MS15"/>
<dbReference type="ChiTaRS" id="IGHV3-49">
    <property type="organism name" value="human"/>
</dbReference>
<dbReference type="Pharos" id="A0A0A0MS15">
    <property type="development level" value="Tdark"/>
</dbReference>
<dbReference type="PRO" id="PR:A0A0A0MS15"/>
<dbReference type="Proteomes" id="UP000005640">
    <property type="component" value="Chromosome 14"/>
</dbReference>
<dbReference type="RNAct" id="A0A0A0MS15">
    <property type="molecule type" value="protein"/>
</dbReference>
<dbReference type="Bgee" id="ENSG00000211965">
    <property type="expression patterns" value="Expressed in duodenum and 91 other cell types or tissues"/>
</dbReference>
<dbReference type="GO" id="GO:0005576">
    <property type="term" value="C:extracellular region"/>
    <property type="evidence" value="ECO:0007669"/>
    <property type="project" value="UniProtKB-SubCell"/>
</dbReference>
<dbReference type="GO" id="GO:0019814">
    <property type="term" value="C:immunoglobulin complex"/>
    <property type="evidence" value="ECO:0007669"/>
    <property type="project" value="UniProtKB-KW"/>
</dbReference>
<dbReference type="GO" id="GO:0005886">
    <property type="term" value="C:plasma membrane"/>
    <property type="evidence" value="ECO:0007669"/>
    <property type="project" value="UniProtKB-SubCell"/>
</dbReference>
<dbReference type="GO" id="GO:0003823">
    <property type="term" value="F:antigen binding"/>
    <property type="evidence" value="ECO:0000318"/>
    <property type="project" value="GO_Central"/>
</dbReference>
<dbReference type="GO" id="GO:0016064">
    <property type="term" value="P:immunoglobulin mediated immune response"/>
    <property type="evidence" value="ECO:0000318"/>
    <property type="project" value="GO_Central"/>
</dbReference>
<dbReference type="CDD" id="cd04981">
    <property type="entry name" value="IgV_H"/>
    <property type="match status" value="1"/>
</dbReference>
<dbReference type="FunFam" id="2.60.40.10:FF:002098">
    <property type="entry name" value="Immunoglobulin heavy variable 3-72"/>
    <property type="match status" value="1"/>
</dbReference>
<dbReference type="Gene3D" id="2.60.40.10">
    <property type="entry name" value="Immunoglobulins"/>
    <property type="match status" value="1"/>
</dbReference>
<dbReference type="InterPro" id="IPR007110">
    <property type="entry name" value="Ig-like_dom"/>
</dbReference>
<dbReference type="InterPro" id="IPR036179">
    <property type="entry name" value="Ig-like_dom_sf"/>
</dbReference>
<dbReference type="InterPro" id="IPR013783">
    <property type="entry name" value="Ig-like_fold"/>
</dbReference>
<dbReference type="InterPro" id="IPR013106">
    <property type="entry name" value="Ig_V-set"/>
</dbReference>
<dbReference type="InterPro" id="IPR050199">
    <property type="entry name" value="IgHV"/>
</dbReference>
<dbReference type="PANTHER" id="PTHR23266">
    <property type="entry name" value="IMMUNOGLOBULIN HEAVY CHAIN"/>
    <property type="match status" value="1"/>
</dbReference>
<dbReference type="Pfam" id="PF07686">
    <property type="entry name" value="V-set"/>
    <property type="match status" value="1"/>
</dbReference>
<dbReference type="SMART" id="SM00406">
    <property type="entry name" value="IGv"/>
    <property type="match status" value="1"/>
</dbReference>
<dbReference type="SUPFAM" id="SSF48726">
    <property type="entry name" value="Immunoglobulin"/>
    <property type="match status" value="1"/>
</dbReference>
<dbReference type="PROSITE" id="PS50835">
    <property type="entry name" value="IG_LIKE"/>
    <property type="match status" value="1"/>
</dbReference>
<comment type="function">
    <text evidence="5 6 7 8">V region of the variable domain of immunoglobulin heavy chains that participates in the antigen recognition (PubMed:24600447). Immunoglobulins, also known as antibodies, are membrane-bound or secreted glycoproteins produced by B lymphocytes. In the recognition phase of humoral immunity, the membrane-bound immunoglobulins serve as receptors which, upon binding of a specific antigen, trigger the clonal expansion and differentiation of B lymphocytes into immunoglobulins-secreting plasma cells. Secreted immunoglobulins mediate the effector phase of humoral immunity, which results in the elimination of bound antigens (PubMed:20176268, PubMed:22158414). The antigen binding site is formed by the variable domain of one heavy chain, together with that of its associated light chain. Thus, each immunoglobulin has two antigen binding sites with remarkable affinity for a particular antigen. The variable domains are assembled by a process called V-(D)-J rearrangement and can then be subjected to somatic hypermutations which, after exposure to antigen and selection, allow affinity maturation for a particular antigen (PubMed:17576170, PubMed:20176268).</text>
</comment>
<comment type="subunit">
    <text evidence="6">Immunoglobulins are composed of two identical heavy chains and two identical light chains; disulfide-linked.</text>
</comment>
<comment type="subcellular location">
    <subcellularLocation>
        <location evidence="6 7">Secreted</location>
    </subcellularLocation>
    <subcellularLocation>
        <location evidence="6 7">Cell membrane</location>
    </subcellularLocation>
</comment>
<comment type="polymorphism">
    <text evidence="10">There are several alleles. The sequence shown is that of IMGT allele IGHV3-49*04.</text>
</comment>
<comment type="caution">
    <text evidence="10">For examples of full-length immunoglobulin heavy chains (of different isotypes) see AC P0DOX2, AC P0DOX3, AC P0DOX4, AC P0DOX5 and AC P0DOX6.</text>
</comment>
<proteinExistence type="evidence at protein level"/>
<accession>A0A0A0MS15</accession>
<reference key="1">
    <citation type="journal article" date="2003" name="Nature">
        <title>The DNA sequence and analysis of human chromosome 14.</title>
        <authorList>
            <person name="Heilig R."/>
            <person name="Eckenberg R."/>
            <person name="Petit J.-L."/>
            <person name="Fonknechten N."/>
            <person name="Da Silva C."/>
            <person name="Cattolico L."/>
            <person name="Levy M."/>
            <person name="Barbe V."/>
            <person name="De Berardinis V."/>
            <person name="Ureta-Vidal A."/>
            <person name="Pelletier E."/>
            <person name="Vico V."/>
            <person name="Anthouard V."/>
            <person name="Rowen L."/>
            <person name="Madan A."/>
            <person name="Qin S."/>
            <person name="Sun H."/>
            <person name="Du H."/>
            <person name="Pepin K."/>
            <person name="Artiguenave F."/>
            <person name="Robert C."/>
            <person name="Cruaud C."/>
            <person name="Bruels T."/>
            <person name="Jaillon O."/>
            <person name="Friedlander L."/>
            <person name="Samson G."/>
            <person name="Brottier P."/>
            <person name="Cure S."/>
            <person name="Segurens B."/>
            <person name="Aniere F."/>
            <person name="Samain S."/>
            <person name="Crespeau H."/>
            <person name="Abbasi N."/>
            <person name="Aiach N."/>
            <person name="Boscus D."/>
            <person name="Dickhoff R."/>
            <person name="Dors M."/>
            <person name="Dubois I."/>
            <person name="Friedman C."/>
            <person name="Gouyvenoux M."/>
            <person name="James R."/>
            <person name="Madan A."/>
            <person name="Mairey-Estrada B."/>
            <person name="Mangenot S."/>
            <person name="Martins N."/>
            <person name="Menard M."/>
            <person name="Oztas S."/>
            <person name="Ratcliffe A."/>
            <person name="Shaffer T."/>
            <person name="Trask B."/>
            <person name="Vacherie B."/>
            <person name="Bellemere C."/>
            <person name="Belser C."/>
            <person name="Besnard-Gonnet M."/>
            <person name="Bartol-Mavel D."/>
            <person name="Boutard M."/>
            <person name="Briez-Silla S."/>
            <person name="Combette S."/>
            <person name="Dufosse-Laurent V."/>
            <person name="Ferron C."/>
            <person name="Lechaplais C."/>
            <person name="Louesse C."/>
            <person name="Muselet D."/>
            <person name="Magdelenat G."/>
            <person name="Pateau E."/>
            <person name="Petit E."/>
            <person name="Sirvain-Trukniewicz P."/>
            <person name="Trybou A."/>
            <person name="Vega-Czarny N."/>
            <person name="Bataille E."/>
            <person name="Bluet E."/>
            <person name="Bordelais I."/>
            <person name="Dubois M."/>
            <person name="Dumont C."/>
            <person name="Guerin T."/>
            <person name="Haffray S."/>
            <person name="Hammadi R."/>
            <person name="Muanga J."/>
            <person name="Pellouin V."/>
            <person name="Robert D."/>
            <person name="Wunderle E."/>
            <person name="Gauguet G."/>
            <person name="Roy A."/>
            <person name="Sainte-Marthe L."/>
            <person name="Verdier J."/>
            <person name="Verdier-Discala C."/>
            <person name="Hillier L.W."/>
            <person name="Fulton L."/>
            <person name="McPherson J."/>
            <person name="Matsuda F."/>
            <person name="Wilson R."/>
            <person name="Scarpelli C."/>
            <person name="Gyapay G."/>
            <person name="Wincker P."/>
            <person name="Saurin W."/>
            <person name="Quetier F."/>
            <person name="Waterston R."/>
            <person name="Hood L."/>
            <person name="Weissenbach J."/>
        </authorList>
    </citation>
    <scope>NUCLEOTIDE SEQUENCE [LARGE SCALE GENOMIC DNA] (IMGT ALLELE IGHV3-49*04)</scope>
</reference>
<reference key="2">
    <citation type="journal article" date="2001" name="Exp. Clin. Immunogenet.">
        <title>Nomenclature of the human immunoglobulin heavy (IGH) genes.</title>
        <authorList>
            <person name="Lefranc M.P."/>
        </authorList>
    </citation>
    <scope>NOMENCLATURE</scope>
</reference>
<reference key="3">
    <citation type="book" date="2001" name="The Immunoglobulin FactsBook.">
        <title>The Immunoglobulin FactsBook.</title>
        <editorList>
            <person name="Lefranc M.P."/>
            <person name="Lefranc G."/>
        </editorList>
        <authorList>
            <person name="Lefranc M.P."/>
            <person name="Lefranc G."/>
        </authorList>
    </citation>
    <scope>NOMENCLATURE</scope>
</reference>
<reference key="4">
    <citation type="journal article" date="2007" name="Annu. Rev. Genet.">
        <title>Immunoglobulin somatic hypermutation.</title>
        <authorList>
            <person name="Teng G."/>
            <person name="Papavasiliou F.N."/>
        </authorList>
    </citation>
    <scope>REVIEW ON SOMATIC HYPERMUTATION</scope>
</reference>
<reference key="5">
    <citation type="journal article" date="2010" name="J. Allergy Clin. Immunol.">
        <title>Structure and function of immunoglobulins.</title>
        <authorList>
            <person name="Schroeder H.W. Jr."/>
            <person name="Cavacini L."/>
        </authorList>
    </citation>
    <scope>REVIEW ON IMMUNOGLOBULINS</scope>
</reference>
<reference key="6">
    <citation type="journal article" date="2012" name="Nat. Rev. Immunol.">
        <title>Molecular programming of B cell memory.</title>
        <authorList>
            <person name="McHeyzer-Williams M."/>
            <person name="Okitsu S."/>
            <person name="Wang N."/>
            <person name="McHeyzer-Williams L."/>
        </authorList>
    </citation>
    <scope>REVIEW ON FUNCTION</scope>
</reference>
<reference key="7">
    <citation type="journal article" date="2014" name="Front. Immunol.">
        <title>Immunoglobulin and T Cell Receptor Genes: IMGT((R)) and the Birth and Rise of Immunoinformatics.</title>
        <authorList>
            <person name="Lefranc M.P."/>
        </authorList>
    </citation>
    <scope>NOMENCLATURE</scope>
</reference>
<sequence length="119" mass="13056">MEFGLSWVFLVAILKGVQCEVQLVESGGGLVQPGRSLRLSCTASGFTFGDYAMSWVRQAPGKGLEWVGFIRSKAYGGTTEYAASVKGRFTISRDDSKSIAYLQMNSLKTEDTAVYYCTR</sequence>
<protein>
    <recommendedName>
        <fullName evidence="4 9">Immunoglobulin heavy variable 3-49</fullName>
    </recommendedName>
</protein>
<organism>
    <name type="scientific">Homo sapiens</name>
    <name type="common">Human</name>
    <dbReference type="NCBI Taxonomy" id="9606"/>
    <lineage>
        <taxon>Eukaryota</taxon>
        <taxon>Metazoa</taxon>
        <taxon>Chordata</taxon>
        <taxon>Craniata</taxon>
        <taxon>Vertebrata</taxon>
        <taxon>Euteleostomi</taxon>
        <taxon>Mammalia</taxon>
        <taxon>Eutheria</taxon>
        <taxon>Euarchontoglires</taxon>
        <taxon>Primates</taxon>
        <taxon>Haplorrhini</taxon>
        <taxon>Catarrhini</taxon>
        <taxon>Hominidae</taxon>
        <taxon>Homo</taxon>
    </lineage>
</organism>